<protein>
    <recommendedName>
        <fullName evidence="1">Uncharacterized protein encoded by LINC03043</fullName>
    </recommendedName>
    <alternativeName>
        <fullName evidence="2">Long intergenic non-protein coding RNA 3043</fullName>
    </alternativeName>
</protein>
<sequence length="90" mass="10046">MGAERVCTKAPEITQDEAEIYSLTNMEGNIGIKGCEFKSWLFKFYQARSQVLLCGEVKNPYLLTSNKTTVKEQNACLTHPDRSAMAGLLL</sequence>
<feature type="chain" id="PRO_0000413690" description="Uncharacterized protein encoded by LINC03043">
    <location>
        <begin position="1"/>
        <end position="90"/>
    </location>
</feature>
<accession>A4D0Y5</accession>
<keyword id="KW-1185">Reference proteome</keyword>
<evidence type="ECO:0000305" key="1"/>
<evidence type="ECO:0000312" key="2">
    <source>
        <dbReference type="HGNC" id="HGNC:51256"/>
    </source>
</evidence>
<reference key="1">
    <citation type="journal article" date="2003" name="Nature">
        <title>The DNA sequence of human chromosome 7.</title>
        <authorList>
            <person name="Hillier L.W."/>
            <person name="Fulton R.S."/>
            <person name="Fulton L.A."/>
            <person name="Graves T.A."/>
            <person name="Pepin K.H."/>
            <person name="Wagner-McPherson C."/>
            <person name="Layman D."/>
            <person name="Maas J."/>
            <person name="Jaeger S."/>
            <person name="Walker R."/>
            <person name="Wylie K."/>
            <person name="Sekhon M."/>
            <person name="Becker M.C."/>
            <person name="O'Laughlin M.D."/>
            <person name="Schaller M.E."/>
            <person name="Fewell G.A."/>
            <person name="Delehaunty K.D."/>
            <person name="Miner T.L."/>
            <person name="Nash W.E."/>
            <person name="Cordes M."/>
            <person name="Du H."/>
            <person name="Sun H."/>
            <person name="Edwards J."/>
            <person name="Bradshaw-Cordum H."/>
            <person name="Ali J."/>
            <person name="Andrews S."/>
            <person name="Isak A."/>
            <person name="Vanbrunt A."/>
            <person name="Nguyen C."/>
            <person name="Du F."/>
            <person name="Lamar B."/>
            <person name="Courtney L."/>
            <person name="Kalicki J."/>
            <person name="Ozersky P."/>
            <person name="Bielicki L."/>
            <person name="Scott K."/>
            <person name="Holmes A."/>
            <person name="Harkins R."/>
            <person name="Harris A."/>
            <person name="Strong C.M."/>
            <person name="Hou S."/>
            <person name="Tomlinson C."/>
            <person name="Dauphin-Kohlberg S."/>
            <person name="Kozlowicz-Reilly A."/>
            <person name="Leonard S."/>
            <person name="Rohlfing T."/>
            <person name="Rock S.M."/>
            <person name="Tin-Wollam A.-M."/>
            <person name="Abbott A."/>
            <person name="Minx P."/>
            <person name="Maupin R."/>
            <person name="Strowmatt C."/>
            <person name="Latreille P."/>
            <person name="Miller N."/>
            <person name="Johnson D."/>
            <person name="Murray J."/>
            <person name="Woessner J.P."/>
            <person name="Wendl M.C."/>
            <person name="Yang S.-P."/>
            <person name="Schultz B.R."/>
            <person name="Wallis J.W."/>
            <person name="Spieth J."/>
            <person name="Bieri T.A."/>
            <person name="Nelson J.O."/>
            <person name="Berkowicz N."/>
            <person name="Wohldmann P.E."/>
            <person name="Cook L.L."/>
            <person name="Hickenbotham M.T."/>
            <person name="Eldred J."/>
            <person name="Williams D."/>
            <person name="Bedell J.A."/>
            <person name="Mardis E.R."/>
            <person name="Clifton S.W."/>
            <person name="Chissoe S.L."/>
            <person name="Marra M.A."/>
            <person name="Raymond C."/>
            <person name="Haugen E."/>
            <person name="Gillett W."/>
            <person name="Zhou Y."/>
            <person name="James R."/>
            <person name="Phelps K."/>
            <person name="Iadanoto S."/>
            <person name="Bubb K."/>
            <person name="Simms E."/>
            <person name="Levy R."/>
            <person name="Clendenning J."/>
            <person name="Kaul R."/>
            <person name="Kent W.J."/>
            <person name="Furey T.S."/>
            <person name="Baertsch R.A."/>
            <person name="Brent M.R."/>
            <person name="Keibler E."/>
            <person name="Flicek P."/>
            <person name="Bork P."/>
            <person name="Suyama M."/>
            <person name="Bailey J.A."/>
            <person name="Portnoy M.E."/>
            <person name="Torrents D."/>
            <person name="Chinwalla A.T."/>
            <person name="Gish W.R."/>
            <person name="Eddy S.R."/>
            <person name="McPherson J.D."/>
            <person name="Olson M.V."/>
            <person name="Eichler E.E."/>
            <person name="Green E.D."/>
            <person name="Waterston R.H."/>
            <person name="Wilson R.K."/>
        </authorList>
    </citation>
    <scope>NUCLEOTIDE SEQUENCE [LARGE SCALE GENOMIC DNA]</scope>
</reference>
<reference key="2">
    <citation type="submission" date="2005-07" db="EMBL/GenBank/DDBJ databases">
        <authorList>
            <person name="Mural R.J."/>
            <person name="Istrail S."/>
            <person name="Sutton G.G."/>
            <person name="Florea L."/>
            <person name="Halpern A.L."/>
            <person name="Mobarry C.M."/>
            <person name="Lippert R."/>
            <person name="Walenz B."/>
            <person name="Shatkay H."/>
            <person name="Dew I."/>
            <person name="Miller J.R."/>
            <person name="Flanigan M.J."/>
            <person name="Edwards N.J."/>
            <person name="Bolanos R."/>
            <person name="Fasulo D."/>
            <person name="Halldorsson B.V."/>
            <person name="Hannenhalli S."/>
            <person name="Turner R."/>
            <person name="Yooseph S."/>
            <person name="Lu F."/>
            <person name="Nusskern D.R."/>
            <person name="Shue B.C."/>
            <person name="Zheng X.H."/>
            <person name="Zhong F."/>
            <person name="Delcher A.L."/>
            <person name="Huson D.H."/>
            <person name="Kravitz S.A."/>
            <person name="Mouchard L."/>
            <person name="Reinert K."/>
            <person name="Remington K.A."/>
            <person name="Clark A.G."/>
            <person name="Waterman M.S."/>
            <person name="Eichler E.E."/>
            <person name="Adams M.D."/>
            <person name="Hunkapiller M.W."/>
            <person name="Myers E.W."/>
            <person name="Venter J.C."/>
        </authorList>
    </citation>
    <scope>NUCLEOTIDE SEQUENCE [LARGE SCALE GENOMIC DNA]</scope>
</reference>
<reference key="3">
    <citation type="journal article" date="2004" name="Genome Res.">
        <title>The status, quality, and expansion of the NIH full-length cDNA project: the Mammalian Gene Collection (MGC).</title>
        <authorList>
            <consortium name="The MGC Project Team"/>
        </authorList>
    </citation>
    <scope>NUCLEOTIDE SEQUENCE [LARGE SCALE MRNA]</scope>
    <source>
        <tissue>Brain</tissue>
    </source>
</reference>
<gene>
    <name evidence="2" type="primary">LINC03043</name>
    <name type="synonym">C7orf77</name>
</gene>
<name>CG077_HUMAN</name>
<dbReference type="EMBL" id="AC004925">
    <property type="status" value="NOT_ANNOTATED_CDS"/>
    <property type="molecule type" value="Genomic_DNA"/>
</dbReference>
<dbReference type="EMBL" id="CH236947">
    <property type="protein sequence ID" value="EAL24324.1"/>
    <property type="molecule type" value="Genomic_DNA"/>
</dbReference>
<dbReference type="EMBL" id="CH471070">
    <property type="protein sequence ID" value="EAW83614.1"/>
    <property type="molecule type" value="Genomic_DNA"/>
</dbReference>
<dbReference type="EMBL" id="BC130600">
    <property type="status" value="NOT_ANNOTATED_CDS"/>
    <property type="molecule type" value="mRNA"/>
</dbReference>
<dbReference type="RefSeq" id="NP_001019774.1">
    <property type="nucleotide sequence ID" value="NM_001024603.1"/>
</dbReference>
<dbReference type="STRING" id="9606.ENSP00000480627"/>
<dbReference type="BioMuta" id="C7orf77"/>
<dbReference type="PaxDb" id="9606-ENSP00000480627"/>
<dbReference type="DNASU" id="154872"/>
<dbReference type="UCSC" id="uc003vlj.2">
    <property type="organism name" value="human"/>
</dbReference>
<dbReference type="AGR" id="HGNC:51256"/>
<dbReference type="DisGeNET" id="154872"/>
<dbReference type="GeneCards" id="LINC03043"/>
<dbReference type="HGNC" id="HGNC:51256">
    <property type="gene designation" value="LINC03043"/>
</dbReference>
<dbReference type="neXtProt" id="NX_A4D0Y5"/>
<dbReference type="eggNOG" id="ENOG502TM4C">
    <property type="taxonomic scope" value="Eukaryota"/>
</dbReference>
<dbReference type="HOGENOM" id="CLU_2440258_0_0_1"/>
<dbReference type="InParanoid" id="A4D0Y5"/>
<dbReference type="PAN-GO" id="A4D0Y5">
    <property type="GO annotations" value="0 GO annotations based on evolutionary models"/>
</dbReference>
<dbReference type="SignaLink" id="A4D0Y5"/>
<dbReference type="BioGRID-ORCS" id="154872">
    <property type="hits" value="9 hits in 219 CRISPR screens"/>
</dbReference>
<dbReference type="ChiTaRS" id="C7orf77">
    <property type="organism name" value="human"/>
</dbReference>
<dbReference type="GenomeRNAi" id="154872"/>
<dbReference type="Pharos" id="A4D0Y5">
    <property type="development level" value="Tdark"/>
</dbReference>
<dbReference type="PRO" id="PR:A4D0Y5"/>
<dbReference type="Proteomes" id="UP000005640">
    <property type="component" value="Chromosome 7"/>
</dbReference>
<dbReference type="RNAct" id="A4D0Y5">
    <property type="molecule type" value="protein"/>
</dbReference>
<dbReference type="InterPro" id="IPR040904">
    <property type="entry name" value="DUF5557"/>
</dbReference>
<dbReference type="Pfam" id="PF17712">
    <property type="entry name" value="DUF5557"/>
    <property type="match status" value="1"/>
</dbReference>
<proteinExistence type="predicted"/>
<organism>
    <name type="scientific">Homo sapiens</name>
    <name type="common">Human</name>
    <dbReference type="NCBI Taxonomy" id="9606"/>
    <lineage>
        <taxon>Eukaryota</taxon>
        <taxon>Metazoa</taxon>
        <taxon>Chordata</taxon>
        <taxon>Craniata</taxon>
        <taxon>Vertebrata</taxon>
        <taxon>Euteleostomi</taxon>
        <taxon>Mammalia</taxon>
        <taxon>Eutheria</taxon>
        <taxon>Euarchontoglires</taxon>
        <taxon>Primates</taxon>
        <taxon>Haplorrhini</taxon>
        <taxon>Catarrhini</taxon>
        <taxon>Hominidae</taxon>
        <taxon>Homo</taxon>
    </lineage>
</organism>